<keyword id="KW-0012">Acyltransferase</keyword>
<keyword id="KW-0256">Endoplasmic reticulum</keyword>
<keyword id="KW-0444">Lipid biosynthesis</keyword>
<keyword id="KW-0443">Lipid metabolism</keyword>
<keyword id="KW-0472">Membrane</keyword>
<keyword id="KW-0594">Phospholipid biosynthesis</keyword>
<keyword id="KW-1208">Phospholipid metabolism</keyword>
<keyword id="KW-1185">Reference proteome</keyword>
<keyword id="KW-0808">Transferase</keyword>
<keyword id="KW-0812">Transmembrane</keyword>
<keyword id="KW-1133">Transmembrane helix</keyword>
<evidence type="ECO:0000250" key="1"/>
<evidence type="ECO:0000255" key="2"/>
<evidence type="ECO:0000269" key="3">
    <source>
    </source>
</evidence>
<evidence type="ECO:0000269" key="4">
    <source>
    </source>
</evidence>
<evidence type="ECO:0000269" key="5">
    <source>
    </source>
</evidence>
<evidence type="ECO:0000269" key="6">
    <source>
    </source>
</evidence>
<evidence type="ECO:0000269" key="7">
    <source>
    </source>
</evidence>
<evidence type="ECO:0000269" key="8">
    <source>
    </source>
</evidence>
<evidence type="ECO:0000269" key="9">
    <source>
    </source>
</evidence>
<evidence type="ECO:0000303" key="10">
    <source>
    </source>
</evidence>
<evidence type="ECO:0000303" key="11">
    <source>
    </source>
</evidence>
<evidence type="ECO:0000305" key="12"/>
<evidence type="ECO:0000305" key="13">
    <source>
    </source>
</evidence>
<evidence type="ECO:0000305" key="14">
    <source>
    </source>
</evidence>
<evidence type="ECO:0000312" key="15">
    <source>
        <dbReference type="Araport" id="AT1G12640"/>
    </source>
</evidence>
<evidence type="ECO:0000312" key="16">
    <source>
        <dbReference type="EMBL" id="AAF88094.1"/>
    </source>
</evidence>
<sequence length="462" mass="52152">MDMSSMAGSIGVSVAVLRFLLCFVATIPVSFACRIVPSRLGKHLYAAASGAFLSYLSFGFSSNLHFLVPMTIGYASMAIYRPKCGIITFFLGFAYLIGCHVFYMSGDAWKEGGIDSTGALMVLTLKVISCSMNYNDGMLKEEGLREAQKKNRLIQMPSLIEYFGYCLCCGSHFAGPVYEMKDYLEWTEGKGIWDTTEKRKKPSPYGATIRAILQAAICMALYLYLVPQYPLTRFTEPVYQEWGFLRKFSYQYMAGFTARWKYYFIWSISEASIIISGLGFSGWTDDASPKPKWDRAKNVDILGVELAKSAVQIPLVWNIQVSTWLRHYVYERLVQNGKKAGFFQLLATQTVSAVWHGLYPGYMMFFVQSALMIAGSRVIYRWQQAISPKMAMLRNIMVFINFLYTVLVLNYSAVGFMVLSLHETLTAYGSVYYIGTIIPVGLILLSYVVPAKPSRPKPRKEE</sequence>
<comment type="function">
    <text evidence="3 5 6 7 8 9 13">Lysophospholipid acyltransferase with broad specificity (PubMed:18154737). Mediates the conversion of lysophosphatidylethanolamine (1-acyl-sn-glycero-3-phosphoethanolamine or LPE) into phosphatidylethanolamine (1,2-diacyl-sn-glycero-3-phosphoethanolamine or PE) (LPEAT activity) (PubMed:18154737). Catalyzes the acylation of lysophosphatidylserine (1-acyl-2-hydroxy-sn-glycero-3-phospho-L-serine or LPS) into phosphatidylserine (1,2-diacyl-sn-glycero-3-phospho-L-serine or PS) (LPSAT activity) (PubMed:18154737). Can convert lysophosphatidylcholine (1-acyl-sn-glycero-3-phosphocholine or LPC) into phosphatidylcholine (1,2-diacyl-sn-glycero-3-phosphocholine or PC) (LPCAT activity) (PubMed:18154737, PubMed:24189065, PubMed:25268378). Exhibits preference for C18-unsaturated acyl-CoA when transferring an acyl group to lysophosphatidylcholine (PubMed:24189065, PubMed:25268378). Can also utilize lysophosphatidylglycerol (LPG) as substrate in vitro (PubMed:18154737). Has neither activity towards lysophosphatidic acid (LPA) nor lysophosphatidylinositol (LPI) (PubMed:18154737). Lysophospholipid acyltransferases catalyze the reacylation step of the phospholipid remodeling pathway also known as the Lands cycle (Probable). The primary function of the Lands cycle is to provide a route for acyl remodeling to modify fatty acid (FA) composition of phospholipids derived from the Kennedy pathway (PubMed:22932756, PubMed:23150634). Is involved in PC acyl editing and phosphocholine headgroup exchange between PC and diacylglycerols. This processes control the majority of acyl fluxes through PC to provide polyunsaturated fatty acids for triacylglycerols synthesis in seeds (PubMed:22932756, PubMed:24189065). Involved with LPCAT2 in the direct incorporation of newly synthesized fatty acids exported form the chloroplast into PC through acyl editing (PubMed:31511316).</text>
</comment>
<comment type="catalytic activity">
    <reaction evidence="3 7">
        <text>a 1-acyl-sn-glycero-3-phosphocholine + an acyl-CoA = a 1,2-diacyl-sn-glycero-3-phosphocholine + CoA</text>
        <dbReference type="Rhea" id="RHEA:12937"/>
        <dbReference type="ChEBI" id="CHEBI:57287"/>
        <dbReference type="ChEBI" id="CHEBI:57643"/>
        <dbReference type="ChEBI" id="CHEBI:58168"/>
        <dbReference type="ChEBI" id="CHEBI:58342"/>
        <dbReference type="EC" id="2.3.1.23"/>
    </reaction>
    <physiologicalReaction direction="left-to-right" evidence="3 7">
        <dbReference type="Rhea" id="RHEA:12938"/>
    </physiologicalReaction>
</comment>
<comment type="catalytic activity">
    <reaction evidence="7">
        <text>1-(9Z-octadecenoyl)-sn-glycero-3-phosphocholine + (9Z)-octadecenoyl-CoA = 1,2-di-(9Z-octadecenoyl)-sn-glycero-3-phosphocholine + CoA</text>
        <dbReference type="Rhea" id="RHEA:37387"/>
        <dbReference type="ChEBI" id="CHEBI:28610"/>
        <dbReference type="ChEBI" id="CHEBI:57287"/>
        <dbReference type="ChEBI" id="CHEBI:57387"/>
        <dbReference type="ChEBI" id="CHEBI:74669"/>
    </reaction>
    <physiologicalReaction direction="left-to-right" evidence="7">
        <dbReference type="Rhea" id="RHEA:37388"/>
    </physiologicalReaction>
</comment>
<comment type="catalytic activity">
    <reaction evidence="7">
        <text>1-(9Z-octadecenoyl)-sn-glycero-3-phosphocholine + (9Z,12Z)-octadecadienoyl-CoA = 1-(9Z)-octadecenoyl-2-(9Z,12Z)-octadecadienoyl-sn-glycero-3-phosphocholine + CoA</text>
        <dbReference type="Rhea" id="RHEA:37391"/>
        <dbReference type="ChEBI" id="CHEBI:28610"/>
        <dbReference type="ChEBI" id="CHEBI:57287"/>
        <dbReference type="ChEBI" id="CHEBI:57383"/>
        <dbReference type="ChEBI" id="CHEBI:74670"/>
    </reaction>
    <physiologicalReaction direction="left-to-right" evidence="7">
        <dbReference type="Rhea" id="RHEA:37392"/>
    </physiologicalReaction>
</comment>
<comment type="catalytic activity">
    <reaction evidence="7">
        <text>(9Z,12Z,15Z)-octadecatrienoyl-CoA + 1-(9Z-octadecenoyl)-sn-glycero-3-phosphocholine = 1-(9Z-octadecaenoyl)-2-(9Z,12Z,15Z-octadecatrienoyl)-sn-glycero-3-phosphocholine + CoA</text>
        <dbReference type="Rhea" id="RHEA:56408"/>
        <dbReference type="ChEBI" id="CHEBI:28610"/>
        <dbReference type="ChEBI" id="CHEBI:57287"/>
        <dbReference type="ChEBI" id="CHEBI:74034"/>
        <dbReference type="ChEBI" id="CHEBI:86133"/>
    </reaction>
    <physiologicalReaction direction="left-to-right" evidence="7">
        <dbReference type="Rhea" id="RHEA:56409"/>
    </physiologicalReaction>
</comment>
<comment type="catalytic activity">
    <reaction evidence="3">
        <text>a 1-acyl-sn-glycero-3-phosphoethanolamine + an acyl-CoA = a 1,2-diacyl-sn-glycero-3-phosphoethanolamine + CoA</text>
        <dbReference type="Rhea" id="RHEA:32995"/>
        <dbReference type="ChEBI" id="CHEBI:57287"/>
        <dbReference type="ChEBI" id="CHEBI:58342"/>
        <dbReference type="ChEBI" id="CHEBI:64381"/>
        <dbReference type="ChEBI" id="CHEBI:64612"/>
        <dbReference type="EC" id="2.3.1.n7"/>
    </reaction>
    <physiologicalReaction direction="left-to-right" evidence="3">
        <dbReference type="Rhea" id="RHEA:32996"/>
    </physiologicalReaction>
</comment>
<comment type="catalytic activity">
    <reaction evidence="3">
        <text>a 1-acyl-sn-glycero-3-phospho-L-serine + an acyl-CoA = a 1,2-diacyl-sn-glycero-3-phospho-L-serine + CoA</text>
        <dbReference type="Rhea" id="RHEA:33191"/>
        <dbReference type="ChEBI" id="CHEBI:57262"/>
        <dbReference type="ChEBI" id="CHEBI:57287"/>
        <dbReference type="ChEBI" id="CHEBI:58342"/>
        <dbReference type="ChEBI" id="CHEBI:64379"/>
        <dbReference type="EC" id="2.3.1.n6"/>
    </reaction>
    <physiologicalReaction direction="left-to-right" evidence="3">
        <dbReference type="Rhea" id="RHEA:33192"/>
    </physiologicalReaction>
</comment>
<comment type="subcellular location">
    <subcellularLocation>
        <location evidence="14">Endoplasmic reticulum membrane</location>
        <topology evidence="14">Multi-pass membrane protein</topology>
    </subcellularLocation>
</comment>
<comment type="tissue specificity">
    <text evidence="6">Expressed in roots, rosette leaves, petals, stigma, chalazal endosperm of developing seeds and vascular bundles of siliques.</text>
</comment>
<comment type="disruption phenotype">
    <text evidence="4 5 6">No visible phenotype under normal growth conditions, but the double mutants lpcat1 and lpcat2-2 show increased contents of very-long-chain fatty acids and decreased polyunsaturated fatty acids in seed triacylglycerols.</text>
</comment>
<comment type="similarity">
    <text evidence="12">Belongs to the membrane-bound acyltransferase family.</text>
</comment>
<comment type="sequence caution" evidence="12">
    <conflict type="erroneous initiation">
        <sequence resource="EMBL-CDS" id="AAF88094"/>
    </conflict>
    <text>Truncated N-terminus.</text>
</comment>
<accession>F4IDU4</accession>
<accession>Q8RWH4</accession>
<accession>Q9LN83</accession>
<feature type="chain" id="PRO_0000425532" description="Lysophospholipid acyltransferase 1">
    <location>
        <begin position="1"/>
        <end position="462"/>
    </location>
</feature>
<feature type="transmembrane region" description="Helical" evidence="2">
    <location>
        <begin position="9"/>
        <end position="29"/>
    </location>
</feature>
<feature type="transmembrane region" description="Helical" evidence="2">
    <location>
        <begin position="52"/>
        <end position="72"/>
    </location>
</feature>
<feature type="transmembrane region" description="Helical" evidence="2">
    <location>
        <begin position="84"/>
        <end position="104"/>
    </location>
</feature>
<feature type="transmembrane region" description="Helical" evidence="2">
    <location>
        <begin position="158"/>
        <end position="178"/>
    </location>
</feature>
<feature type="transmembrane region" description="Helical" evidence="2">
    <location>
        <begin position="211"/>
        <end position="231"/>
    </location>
</feature>
<feature type="transmembrane region" description="Helical" evidence="2">
    <location>
        <begin position="263"/>
        <end position="283"/>
    </location>
</feature>
<feature type="transmembrane region" description="Helical" evidence="2">
    <location>
        <begin position="353"/>
        <end position="373"/>
    </location>
</feature>
<feature type="transmembrane region" description="Helical" evidence="2">
    <location>
        <begin position="396"/>
        <end position="416"/>
    </location>
</feature>
<feature type="transmembrane region" description="Helical" evidence="2">
    <location>
        <begin position="431"/>
        <end position="451"/>
    </location>
</feature>
<feature type="active site" evidence="1">
    <location>
        <position position="356"/>
    </location>
</feature>
<feature type="sequence conflict" description="In Ref. 3; AAM13086/AAM91162." evidence="12" ref="3">
    <original>E</original>
    <variation>K</variation>
    <location>
        <position position="161"/>
    </location>
</feature>
<gene>
    <name evidence="11" type="primary">LPCAT1</name>
    <name evidence="10" type="synonym">LPLAT1</name>
    <name evidence="15" type="ordered locus">At1g12640</name>
    <name evidence="16" type="ORF">T12C24.17</name>
</gene>
<reference key="1">
    <citation type="journal article" date="2000" name="Nature">
        <title>Sequence and analysis of chromosome 1 of the plant Arabidopsis thaliana.</title>
        <authorList>
            <person name="Theologis A."/>
            <person name="Ecker J.R."/>
            <person name="Palm C.J."/>
            <person name="Federspiel N.A."/>
            <person name="Kaul S."/>
            <person name="White O."/>
            <person name="Alonso J."/>
            <person name="Altafi H."/>
            <person name="Araujo R."/>
            <person name="Bowman C.L."/>
            <person name="Brooks S.Y."/>
            <person name="Buehler E."/>
            <person name="Chan A."/>
            <person name="Chao Q."/>
            <person name="Chen H."/>
            <person name="Cheuk R.F."/>
            <person name="Chin C.W."/>
            <person name="Chung M.K."/>
            <person name="Conn L."/>
            <person name="Conway A.B."/>
            <person name="Conway A.R."/>
            <person name="Creasy T.H."/>
            <person name="Dewar K."/>
            <person name="Dunn P."/>
            <person name="Etgu P."/>
            <person name="Feldblyum T.V."/>
            <person name="Feng J.-D."/>
            <person name="Fong B."/>
            <person name="Fujii C.Y."/>
            <person name="Gill J.E."/>
            <person name="Goldsmith A.D."/>
            <person name="Haas B."/>
            <person name="Hansen N.F."/>
            <person name="Hughes B."/>
            <person name="Huizar L."/>
            <person name="Hunter J.L."/>
            <person name="Jenkins J."/>
            <person name="Johnson-Hopson C."/>
            <person name="Khan S."/>
            <person name="Khaykin E."/>
            <person name="Kim C.J."/>
            <person name="Koo H.L."/>
            <person name="Kremenetskaia I."/>
            <person name="Kurtz D.B."/>
            <person name="Kwan A."/>
            <person name="Lam B."/>
            <person name="Langin-Hooper S."/>
            <person name="Lee A."/>
            <person name="Lee J.M."/>
            <person name="Lenz C.A."/>
            <person name="Li J.H."/>
            <person name="Li Y.-P."/>
            <person name="Lin X."/>
            <person name="Liu S.X."/>
            <person name="Liu Z.A."/>
            <person name="Luros J.S."/>
            <person name="Maiti R."/>
            <person name="Marziali A."/>
            <person name="Militscher J."/>
            <person name="Miranda M."/>
            <person name="Nguyen M."/>
            <person name="Nierman W.C."/>
            <person name="Osborne B.I."/>
            <person name="Pai G."/>
            <person name="Peterson J."/>
            <person name="Pham P.K."/>
            <person name="Rizzo M."/>
            <person name="Rooney T."/>
            <person name="Rowley D."/>
            <person name="Sakano H."/>
            <person name="Salzberg S.L."/>
            <person name="Schwartz J.R."/>
            <person name="Shinn P."/>
            <person name="Southwick A.M."/>
            <person name="Sun H."/>
            <person name="Tallon L.J."/>
            <person name="Tambunga G."/>
            <person name="Toriumi M.J."/>
            <person name="Town C.D."/>
            <person name="Utterback T."/>
            <person name="Van Aken S."/>
            <person name="Vaysberg M."/>
            <person name="Vysotskaia V.S."/>
            <person name="Walker M."/>
            <person name="Wu D."/>
            <person name="Yu G."/>
            <person name="Fraser C.M."/>
            <person name="Venter J.C."/>
            <person name="Davis R.W."/>
        </authorList>
    </citation>
    <scope>NUCLEOTIDE SEQUENCE [LARGE SCALE GENOMIC DNA]</scope>
    <source>
        <strain>cv. Columbia</strain>
    </source>
</reference>
<reference key="2">
    <citation type="journal article" date="2017" name="Plant J.">
        <title>Araport11: a complete reannotation of the Arabidopsis thaliana reference genome.</title>
        <authorList>
            <person name="Cheng C.Y."/>
            <person name="Krishnakumar V."/>
            <person name="Chan A.P."/>
            <person name="Thibaud-Nissen F."/>
            <person name="Schobel S."/>
            <person name="Town C.D."/>
        </authorList>
    </citation>
    <scope>GENOME REANNOTATION</scope>
    <source>
        <strain>cv. Columbia</strain>
    </source>
</reference>
<reference key="3">
    <citation type="journal article" date="2003" name="Science">
        <title>Empirical analysis of transcriptional activity in the Arabidopsis genome.</title>
        <authorList>
            <person name="Yamada K."/>
            <person name="Lim J."/>
            <person name="Dale J.M."/>
            <person name="Chen H."/>
            <person name="Shinn P."/>
            <person name="Palm C.J."/>
            <person name="Southwick A.M."/>
            <person name="Wu H.C."/>
            <person name="Kim C.J."/>
            <person name="Nguyen M."/>
            <person name="Pham P.K."/>
            <person name="Cheuk R.F."/>
            <person name="Karlin-Newmann G."/>
            <person name="Liu S.X."/>
            <person name="Lam B."/>
            <person name="Sakano H."/>
            <person name="Wu T."/>
            <person name="Yu G."/>
            <person name="Miranda M."/>
            <person name="Quach H.L."/>
            <person name="Tripp M."/>
            <person name="Chang C.H."/>
            <person name="Lee J.M."/>
            <person name="Toriumi M.J."/>
            <person name="Chan M.M."/>
            <person name="Tang C.C."/>
            <person name="Onodera C.S."/>
            <person name="Deng J.M."/>
            <person name="Akiyama K."/>
            <person name="Ansari Y."/>
            <person name="Arakawa T."/>
            <person name="Banh J."/>
            <person name="Banno F."/>
            <person name="Bowser L."/>
            <person name="Brooks S.Y."/>
            <person name="Carninci P."/>
            <person name="Chao Q."/>
            <person name="Choy N."/>
            <person name="Enju A."/>
            <person name="Goldsmith A.D."/>
            <person name="Gurjal M."/>
            <person name="Hansen N.F."/>
            <person name="Hayashizaki Y."/>
            <person name="Johnson-Hopson C."/>
            <person name="Hsuan V.W."/>
            <person name="Iida K."/>
            <person name="Karnes M."/>
            <person name="Khan S."/>
            <person name="Koesema E."/>
            <person name="Ishida J."/>
            <person name="Jiang P.X."/>
            <person name="Jones T."/>
            <person name="Kawai J."/>
            <person name="Kamiya A."/>
            <person name="Meyers C."/>
            <person name="Nakajima M."/>
            <person name="Narusaka M."/>
            <person name="Seki M."/>
            <person name="Sakurai T."/>
            <person name="Satou M."/>
            <person name="Tamse R."/>
            <person name="Vaysberg M."/>
            <person name="Wallender E.K."/>
            <person name="Wong C."/>
            <person name="Yamamura Y."/>
            <person name="Yuan S."/>
            <person name="Shinozaki K."/>
            <person name="Davis R.W."/>
            <person name="Theologis A."/>
            <person name="Ecker J.R."/>
        </authorList>
    </citation>
    <scope>NUCLEOTIDE SEQUENCE [LARGE SCALE MRNA]</scope>
    <source>
        <strain>cv. Columbia</strain>
    </source>
</reference>
<reference key="4">
    <citation type="journal article" date="2008" name="FEBS Lett.">
        <title>A family of eukaryotic lysophospholipid acyltransferases with broad specificity.</title>
        <authorList>
            <person name="Stahl U."/>
            <person name="Stalberg K."/>
            <person name="Stymne S."/>
            <person name="Ronne H."/>
        </authorList>
    </citation>
    <scope>FUNCTION</scope>
    <scope>CATALYTIC ACTIVITY</scope>
</reference>
<reference key="5">
    <citation type="journal article" date="2012" name="BMC Plant Biol.">
        <title>Triacylglycerol synthesis by PDAT1 in the absence of DGAT1 activity is dependent on re-acylation of LPC by LPCAT2.</title>
        <authorList>
            <person name="Xu J."/>
            <person name="Carlsson A.S."/>
            <person name="Francis T."/>
            <person name="Zhang M."/>
            <person name="Hoffman T."/>
            <person name="Giblin M.E."/>
            <person name="Taylor D.C."/>
        </authorList>
    </citation>
    <scope>DISRUPTION PHENOTYPE</scope>
</reference>
<reference key="6">
    <citation type="journal article" date="2012" name="Plant Cell">
        <title>Metabolic interactions between the Lands cycle and the Kennedy pathway of glycerolipid synthesis in Arabidopsis developing seeds.</title>
        <authorList>
            <person name="Wang L."/>
            <person name="Shen W."/>
            <person name="Kazachkov M."/>
            <person name="Chen G."/>
            <person name="Chen Q."/>
            <person name="Carlsson A.S."/>
            <person name="Stymne S."/>
            <person name="Weselake R.J."/>
            <person name="Zou J."/>
        </authorList>
    </citation>
    <scope>FUNCTION</scope>
    <scope>TISSUE SPECIFICITY</scope>
    <scope>DISRUPTION PHENOTYPE</scope>
</reference>
<reference key="7">
    <citation type="journal article" date="2012" name="Plant Physiol.">
        <title>Putative glycosyltransferases and other plant Golgi apparatus proteins are revealed by LOPIT proteomics.</title>
        <authorList>
            <person name="Nikolovski N."/>
            <person name="Rubtsov D."/>
            <person name="Segura M.P."/>
            <person name="Miles G.P."/>
            <person name="Stevens T.J."/>
            <person name="Dunkley T.P."/>
            <person name="Munro S."/>
            <person name="Lilley K.S."/>
            <person name="Dupree P."/>
        </authorList>
    </citation>
    <scope>IDENTIFICATION BY MASS SPECTROMETRY</scope>
    <scope>SUBCELLULAR LOCATION</scope>
</reference>
<reference key="8">
    <citation type="journal article" date="2012" name="Plant Physiol.">
        <title>Acyl editing and headgroup exchange are the major mechanisms that direct polyunsaturated fatty acid flux into triacylglycerols.</title>
        <authorList>
            <person name="Bates P.D."/>
            <person name="Fatihi A."/>
            <person name="Snapp A.R."/>
            <person name="Carlsson A.S."/>
            <person name="Browse J."/>
            <person name="Lu C."/>
        </authorList>
    </citation>
    <scope>FUNCTION</scope>
    <scope>DISRUPTION PHENOTYPE</scope>
</reference>
<reference key="9">
    <citation type="journal article" date="2013" name="J. Biol. Chem.">
        <title>Plant acyl-CoA:lysophosphatidylcholine acyltransferases (LPCATs) have different specificities in their forward and reverse reactions.</title>
        <authorList>
            <person name="Lager I."/>
            <person name="Yilmaz J.L."/>
            <person name="Zhou X.R."/>
            <person name="Jasieniecka K."/>
            <person name="Kazachkov M."/>
            <person name="Wang P."/>
            <person name="Zou J."/>
            <person name="Weselake R."/>
            <person name="Smith M.A."/>
            <person name="Bayon S."/>
            <person name="Dyer J.M."/>
            <person name="Shockey J.M."/>
            <person name="Heinz E."/>
            <person name="Green A."/>
            <person name="Banas A."/>
            <person name="Stymne S."/>
        </authorList>
    </citation>
    <scope>FUNCTION</scope>
    <scope>CATALYTIC ACTIVITY</scope>
</reference>
<reference key="10">
    <citation type="journal article" date="2014" name="Plant J.">
        <title>Deciphering the roles of Arabidopsis LPCAT and PAH in phosphatidylcholine homeostasis and pathway coordination for chloroplast lipid synthesis.</title>
        <authorList>
            <person name="Wang L."/>
            <person name="Kazachkov M."/>
            <person name="Shen W."/>
            <person name="Bai M."/>
            <person name="Wu H."/>
            <person name="Zou J."/>
        </authorList>
    </citation>
    <scope>FUNCTION</scope>
</reference>
<reference key="11">
    <citation type="journal article" date="2019" name="Plant Cell">
        <title>Metabolically distinct pools of phosphatidylcholine are involved in trafficking of fatty acids out of and into the chloroplast for membrane production.</title>
        <authorList>
            <person name="Karki N."/>
            <person name="Johnson B.S."/>
            <person name="Bates P.D."/>
        </authorList>
    </citation>
    <scope>FUNCTION</scope>
</reference>
<organism>
    <name type="scientific">Arabidopsis thaliana</name>
    <name type="common">Mouse-ear cress</name>
    <dbReference type="NCBI Taxonomy" id="3702"/>
    <lineage>
        <taxon>Eukaryota</taxon>
        <taxon>Viridiplantae</taxon>
        <taxon>Streptophyta</taxon>
        <taxon>Embryophyta</taxon>
        <taxon>Tracheophyta</taxon>
        <taxon>Spermatophyta</taxon>
        <taxon>Magnoliopsida</taxon>
        <taxon>eudicotyledons</taxon>
        <taxon>Gunneridae</taxon>
        <taxon>Pentapetalae</taxon>
        <taxon>rosids</taxon>
        <taxon>malvids</taxon>
        <taxon>Brassicales</taxon>
        <taxon>Brassicaceae</taxon>
        <taxon>Camelineae</taxon>
        <taxon>Arabidopsis</taxon>
    </lineage>
</organism>
<protein>
    <recommendedName>
        <fullName evidence="10">Lysophospholipid acyltransferase 1</fullName>
        <shortName evidence="10">AtLPLAT1</shortName>
        <ecNumber evidence="3">2.3.1.-</ecNumber>
    </recommendedName>
    <alternativeName>
        <fullName evidence="12">1-acylglycerophosphocholine O-acyltransferase</fullName>
        <ecNumber evidence="3">2.3.1.23</ecNumber>
    </alternativeName>
    <alternativeName>
        <fullName evidence="12">1-acylglycerophosphoethanolamine O-acyltransferase</fullName>
        <ecNumber evidence="3">2.3.1.n7</ecNumber>
    </alternativeName>
    <alternativeName>
        <fullName evidence="12">1-acylglycerophosphoserine O-acyltransferase</fullName>
        <ecNumber evidence="3">2.3.1.n6</ecNumber>
    </alternativeName>
    <alternativeName>
        <fullName evidence="11">Lysophosphatidylcholine acyltransferase 1</fullName>
        <shortName evidence="11">LPCAT1</shortName>
    </alternativeName>
    <alternativeName>
        <fullName evidence="10">Lysophosphatidylethanolamine acyltransferase</fullName>
        <shortName evidence="10">LPEAT</shortName>
    </alternativeName>
    <alternativeName>
        <fullName evidence="10">Lysophosphatidylglycerol acyltransferase</fullName>
        <shortName evidence="10">LPGAT</shortName>
    </alternativeName>
    <alternativeName>
        <fullName evidence="10">Lysophosphatidylserine acyltransferase</fullName>
        <shortName evidence="10">LPSAT</shortName>
    </alternativeName>
</protein>
<name>MBOA1_ARATH</name>
<proteinExistence type="evidence at protein level"/>
<dbReference type="EC" id="2.3.1.-" evidence="3"/>
<dbReference type="EC" id="2.3.1.23" evidence="3"/>
<dbReference type="EC" id="2.3.1.n7" evidence="3"/>
<dbReference type="EC" id="2.3.1.n6" evidence="3"/>
<dbReference type="EMBL" id="AC025417">
    <property type="protein sequence ID" value="AAF88094.1"/>
    <property type="status" value="ALT_INIT"/>
    <property type="molecule type" value="Genomic_DNA"/>
</dbReference>
<dbReference type="EMBL" id="CP002684">
    <property type="protein sequence ID" value="AEE28904.1"/>
    <property type="molecule type" value="Genomic_DNA"/>
</dbReference>
<dbReference type="EMBL" id="AY093087">
    <property type="protein sequence ID" value="AAM13086.1"/>
    <property type="molecule type" value="mRNA"/>
</dbReference>
<dbReference type="EMBL" id="AY128762">
    <property type="protein sequence ID" value="AAM91162.1"/>
    <property type="molecule type" value="mRNA"/>
</dbReference>
<dbReference type="RefSeq" id="NP_172724.2">
    <property type="nucleotide sequence ID" value="NM_101134.5"/>
</dbReference>
<dbReference type="SMR" id="F4IDU4"/>
<dbReference type="FunCoup" id="F4IDU4">
    <property type="interactions" value="3269"/>
</dbReference>
<dbReference type="STRING" id="3702.F4IDU4"/>
<dbReference type="SwissLipids" id="SLP:000001897"/>
<dbReference type="PaxDb" id="3702-AT1G12640.1"/>
<dbReference type="ProteomicsDB" id="238237"/>
<dbReference type="EnsemblPlants" id="AT1G12640.1">
    <property type="protein sequence ID" value="AT1G12640.1"/>
    <property type="gene ID" value="AT1G12640"/>
</dbReference>
<dbReference type="GeneID" id="837820"/>
<dbReference type="Gramene" id="AT1G12640.1">
    <property type="protein sequence ID" value="AT1G12640.1"/>
    <property type="gene ID" value="AT1G12640"/>
</dbReference>
<dbReference type="KEGG" id="ath:AT1G12640"/>
<dbReference type="Araport" id="AT1G12640"/>
<dbReference type="TAIR" id="AT1G12640">
    <property type="gene designation" value="LPLAT1"/>
</dbReference>
<dbReference type="eggNOG" id="KOG2704">
    <property type="taxonomic scope" value="Eukaryota"/>
</dbReference>
<dbReference type="HOGENOM" id="CLU_011340_2_0_1"/>
<dbReference type="InParanoid" id="F4IDU4"/>
<dbReference type="OMA" id="WHGTRPG"/>
<dbReference type="BioCyc" id="ARA:AT1G12640-MONOMER"/>
<dbReference type="BioCyc" id="MetaCyc:MONOMER-19024"/>
<dbReference type="PRO" id="PR:F4IDU4"/>
<dbReference type="Proteomes" id="UP000006548">
    <property type="component" value="Chromosome 1"/>
</dbReference>
<dbReference type="ExpressionAtlas" id="F4IDU4">
    <property type="expression patterns" value="baseline and differential"/>
</dbReference>
<dbReference type="GO" id="GO:0005783">
    <property type="term" value="C:endoplasmic reticulum"/>
    <property type="evidence" value="ECO:0007005"/>
    <property type="project" value="TAIR"/>
</dbReference>
<dbReference type="GO" id="GO:0005789">
    <property type="term" value="C:endoplasmic reticulum membrane"/>
    <property type="evidence" value="ECO:0007669"/>
    <property type="project" value="UniProtKB-SubCell"/>
</dbReference>
<dbReference type="GO" id="GO:0005576">
    <property type="term" value="C:extracellular region"/>
    <property type="evidence" value="ECO:0007005"/>
    <property type="project" value="TAIR"/>
</dbReference>
<dbReference type="GO" id="GO:0005886">
    <property type="term" value="C:plasma membrane"/>
    <property type="evidence" value="ECO:0007005"/>
    <property type="project" value="TAIR"/>
</dbReference>
<dbReference type="GO" id="GO:0047184">
    <property type="term" value="F:1-acylglycerophosphocholine O-acyltransferase activity"/>
    <property type="evidence" value="ECO:0007669"/>
    <property type="project" value="UniProtKB-EC"/>
</dbReference>
<dbReference type="GO" id="GO:0106262">
    <property type="term" value="F:1-acylglycerophosphoethanolamine O-acyltransferase activity"/>
    <property type="evidence" value="ECO:0007669"/>
    <property type="project" value="RHEA"/>
</dbReference>
<dbReference type="GO" id="GO:0106263">
    <property type="term" value="F:1-acylglycerophosphoserine O-acyltransferase activity"/>
    <property type="evidence" value="ECO:0007669"/>
    <property type="project" value="RHEA"/>
</dbReference>
<dbReference type="GO" id="GO:0016746">
    <property type="term" value="F:acyltransferase activity"/>
    <property type="evidence" value="ECO:0000314"/>
    <property type="project" value="TAIR"/>
</dbReference>
<dbReference type="GO" id="GO:0071617">
    <property type="term" value="F:lysophospholipid acyltransferase activity"/>
    <property type="evidence" value="ECO:0000316"/>
    <property type="project" value="TAIR"/>
</dbReference>
<dbReference type="GO" id="GO:0019375">
    <property type="term" value="P:galactolipid biosynthetic process"/>
    <property type="evidence" value="ECO:0000316"/>
    <property type="project" value="TAIR"/>
</dbReference>
<dbReference type="GO" id="GO:0045017">
    <property type="term" value="P:glycerolipid biosynthetic process"/>
    <property type="evidence" value="ECO:0000315"/>
    <property type="project" value="TAIR"/>
</dbReference>
<dbReference type="GO" id="GO:0008654">
    <property type="term" value="P:phospholipid biosynthetic process"/>
    <property type="evidence" value="ECO:0000316"/>
    <property type="project" value="TAIR"/>
</dbReference>
<dbReference type="GO" id="GO:0019432">
    <property type="term" value="P:triglyceride biosynthetic process"/>
    <property type="evidence" value="ECO:0000316"/>
    <property type="project" value="TAIR"/>
</dbReference>
<dbReference type="InterPro" id="IPR049941">
    <property type="entry name" value="LPLAT_7/PORCN-like"/>
</dbReference>
<dbReference type="InterPro" id="IPR004299">
    <property type="entry name" value="MBOAT_fam"/>
</dbReference>
<dbReference type="PANTHER" id="PTHR13906:SF4">
    <property type="entry name" value="LYSOPHOSPHOLIPID ACYLTRANSFERASE 6"/>
    <property type="match status" value="1"/>
</dbReference>
<dbReference type="PANTHER" id="PTHR13906">
    <property type="entry name" value="PORCUPINE"/>
    <property type="match status" value="1"/>
</dbReference>
<dbReference type="Pfam" id="PF03062">
    <property type="entry name" value="MBOAT"/>
    <property type="match status" value="1"/>
</dbReference>